<gene>
    <name evidence="1" type="primary">miaB</name>
    <name type="ordered locus">ESA_02675</name>
</gene>
<reference key="1">
    <citation type="journal article" date="2010" name="PLoS ONE">
        <title>Genome sequence of Cronobacter sakazakii BAA-894 and comparative genomic hybridization analysis with other Cronobacter species.</title>
        <authorList>
            <person name="Kucerova E."/>
            <person name="Clifton S.W."/>
            <person name="Xia X.Q."/>
            <person name="Long F."/>
            <person name="Porwollik S."/>
            <person name="Fulton L."/>
            <person name="Fronick C."/>
            <person name="Minx P."/>
            <person name="Kyung K."/>
            <person name="Warren W."/>
            <person name="Fulton R."/>
            <person name="Feng D."/>
            <person name="Wollam A."/>
            <person name="Shah N."/>
            <person name="Bhonagiri V."/>
            <person name="Nash W.E."/>
            <person name="Hallsworth-Pepin K."/>
            <person name="Wilson R.K."/>
            <person name="McClelland M."/>
            <person name="Forsythe S.J."/>
        </authorList>
    </citation>
    <scope>NUCLEOTIDE SEQUENCE [LARGE SCALE GENOMIC DNA]</scope>
    <source>
        <strain>ATCC BAA-894</strain>
    </source>
</reference>
<organism>
    <name type="scientific">Cronobacter sakazakii (strain ATCC BAA-894)</name>
    <name type="common">Enterobacter sakazakii</name>
    <dbReference type="NCBI Taxonomy" id="290339"/>
    <lineage>
        <taxon>Bacteria</taxon>
        <taxon>Pseudomonadati</taxon>
        <taxon>Pseudomonadota</taxon>
        <taxon>Gammaproteobacteria</taxon>
        <taxon>Enterobacterales</taxon>
        <taxon>Enterobacteriaceae</taxon>
        <taxon>Cronobacter</taxon>
    </lineage>
</organism>
<feature type="chain" id="PRO_0000374276" description="tRNA-2-methylthio-N(6)-dimethylallyladenosine synthase">
    <location>
        <begin position="1"/>
        <end position="474"/>
    </location>
</feature>
<feature type="domain" description="MTTase N-terminal" evidence="1">
    <location>
        <begin position="3"/>
        <end position="120"/>
    </location>
</feature>
<feature type="domain" description="Radical SAM core" evidence="2">
    <location>
        <begin position="143"/>
        <end position="375"/>
    </location>
</feature>
<feature type="domain" description="TRAM" evidence="1">
    <location>
        <begin position="378"/>
        <end position="441"/>
    </location>
</feature>
<feature type="binding site" evidence="1">
    <location>
        <position position="12"/>
    </location>
    <ligand>
        <name>[4Fe-4S] cluster</name>
        <dbReference type="ChEBI" id="CHEBI:49883"/>
        <label>1</label>
    </ligand>
</feature>
<feature type="binding site" evidence="1">
    <location>
        <position position="49"/>
    </location>
    <ligand>
        <name>[4Fe-4S] cluster</name>
        <dbReference type="ChEBI" id="CHEBI:49883"/>
        <label>1</label>
    </ligand>
</feature>
<feature type="binding site" evidence="1">
    <location>
        <position position="83"/>
    </location>
    <ligand>
        <name>[4Fe-4S] cluster</name>
        <dbReference type="ChEBI" id="CHEBI:49883"/>
        <label>1</label>
    </ligand>
</feature>
<feature type="binding site" evidence="1">
    <location>
        <position position="157"/>
    </location>
    <ligand>
        <name>[4Fe-4S] cluster</name>
        <dbReference type="ChEBI" id="CHEBI:49883"/>
        <label>2</label>
        <note>4Fe-4S-S-AdoMet</note>
    </ligand>
</feature>
<feature type="binding site" evidence="1">
    <location>
        <position position="161"/>
    </location>
    <ligand>
        <name>[4Fe-4S] cluster</name>
        <dbReference type="ChEBI" id="CHEBI:49883"/>
        <label>2</label>
        <note>4Fe-4S-S-AdoMet</note>
    </ligand>
</feature>
<feature type="binding site" evidence="1">
    <location>
        <position position="164"/>
    </location>
    <ligand>
        <name>[4Fe-4S] cluster</name>
        <dbReference type="ChEBI" id="CHEBI:49883"/>
        <label>2</label>
        <note>4Fe-4S-S-AdoMet</note>
    </ligand>
</feature>
<sequence length="474" mass="53613">MTKKLHIKTWGCQMNEYDSSKMADLLETTHGFTLTDVAEEADILLLNTCSIREKAQEKVFHQLGRWKTLKEKNPDVIIGVGGCVASQEGDHIRDRARYVDIIFGPQTLHRLPEMINQVKGTRSPVVDISFPEIEKFDRLPEPRAEGPTAFVSIMEGCNKYCTYCVVPYTRGEEVSRPSDDIVLEIAQLAAQGVREVNLLGQNVNAWRGENYDGTTGTFADLLRLVAAIDGIDRIRFTTSHPIEFTDDIIEVYRDTPELVSFLHLPVQSGSDRVLNMMGRTHTALEYKAIIRKLRAARPDIQISSDFIVGFPGETQQDFEQTMKLIAEVNFDMSYSFIFSARPGTPAADMVDDVPEEEKKQRLYILQERINQQAMAWSRRMLGTTQRILVEGTSRKSIMELSGRTENNRVVNFEGSPDMVGKFVDVEITEVFPNSLRGKVIRTEDEMGLRVVESPESIIARTRKENELGVGIFQP</sequence>
<protein>
    <recommendedName>
        <fullName evidence="1">tRNA-2-methylthio-N(6)-dimethylallyladenosine synthase</fullName>
        <ecNumber evidence="1">2.8.4.3</ecNumber>
    </recommendedName>
    <alternativeName>
        <fullName evidence="1">(Dimethylallyl)adenosine tRNA methylthiotransferase MiaB</fullName>
    </alternativeName>
    <alternativeName>
        <fullName evidence="1">tRNA-i(6)A37 methylthiotransferase</fullName>
    </alternativeName>
</protein>
<keyword id="KW-0004">4Fe-4S</keyword>
<keyword id="KW-0963">Cytoplasm</keyword>
<keyword id="KW-0408">Iron</keyword>
<keyword id="KW-0411">Iron-sulfur</keyword>
<keyword id="KW-0479">Metal-binding</keyword>
<keyword id="KW-1185">Reference proteome</keyword>
<keyword id="KW-0949">S-adenosyl-L-methionine</keyword>
<keyword id="KW-0808">Transferase</keyword>
<keyword id="KW-0819">tRNA processing</keyword>
<proteinExistence type="inferred from homology"/>
<dbReference type="EC" id="2.8.4.3" evidence="1"/>
<dbReference type="EMBL" id="CP000783">
    <property type="protein sequence ID" value="ABU77908.1"/>
    <property type="molecule type" value="Genomic_DNA"/>
</dbReference>
<dbReference type="RefSeq" id="WP_004387188.1">
    <property type="nucleotide sequence ID" value="NC_009778.1"/>
</dbReference>
<dbReference type="SMR" id="A7MQS5"/>
<dbReference type="GeneID" id="56731469"/>
<dbReference type="KEGG" id="esa:ESA_02675"/>
<dbReference type="HOGENOM" id="CLU_018697_2_0_6"/>
<dbReference type="Proteomes" id="UP000000260">
    <property type="component" value="Chromosome"/>
</dbReference>
<dbReference type="GO" id="GO:0005829">
    <property type="term" value="C:cytosol"/>
    <property type="evidence" value="ECO:0007669"/>
    <property type="project" value="TreeGrafter"/>
</dbReference>
<dbReference type="GO" id="GO:0051539">
    <property type="term" value="F:4 iron, 4 sulfur cluster binding"/>
    <property type="evidence" value="ECO:0007669"/>
    <property type="project" value="UniProtKB-UniRule"/>
</dbReference>
<dbReference type="GO" id="GO:0046872">
    <property type="term" value="F:metal ion binding"/>
    <property type="evidence" value="ECO:0007669"/>
    <property type="project" value="UniProtKB-KW"/>
</dbReference>
<dbReference type="GO" id="GO:0035597">
    <property type="term" value="F:N6-isopentenyladenosine methylthiotransferase activity"/>
    <property type="evidence" value="ECO:0007669"/>
    <property type="project" value="TreeGrafter"/>
</dbReference>
<dbReference type="CDD" id="cd01335">
    <property type="entry name" value="Radical_SAM"/>
    <property type="match status" value="1"/>
</dbReference>
<dbReference type="FunFam" id="3.40.50.12160:FF:000001">
    <property type="entry name" value="tRNA-2-methylthio-N(6)-dimethylallyladenosine synthase"/>
    <property type="match status" value="1"/>
</dbReference>
<dbReference type="FunFam" id="3.80.30.20:FF:000001">
    <property type="entry name" value="tRNA-2-methylthio-N(6)-dimethylallyladenosine synthase 2"/>
    <property type="match status" value="1"/>
</dbReference>
<dbReference type="Gene3D" id="3.40.50.12160">
    <property type="entry name" value="Methylthiotransferase, N-terminal domain"/>
    <property type="match status" value="1"/>
</dbReference>
<dbReference type="Gene3D" id="3.80.30.20">
    <property type="entry name" value="tm_1862 like domain"/>
    <property type="match status" value="1"/>
</dbReference>
<dbReference type="HAMAP" id="MF_01864">
    <property type="entry name" value="tRNA_metthiotr_MiaB"/>
    <property type="match status" value="1"/>
</dbReference>
<dbReference type="InterPro" id="IPR006638">
    <property type="entry name" value="Elp3/MiaA/NifB-like_rSAM"/>
</dbReference>
<dbReference type="InterPro" id="IPR005839">
    <property type="entry name" value="Methylthiotransferase"/>
</dbReference>
<dbReference type="InterPro" id="IPR020612">
    <property type="entry name" value="Methylthiotransferase_CS"/>
</dbReference>
<dbReference type="InterPro" id="IPR013848">
    <property type="entry name" value="Methylthiotransferase_N"/>
</dbReference>
<dbReference type="InterPro" id="IPR038135">
    <property type="entry name" value="Methylthiotransferase_N_sf"/>
</dbReference>
<dbReference type="InterPro" id="IPR006463">
    <property type="entry name" value="MiaB_methiolase"/>
</dbReference>
<dbReference type="InterPro" id="IPR007197">
    <property type="entry name" value="rSAM"/>
</dbReference>
<dbReference type="InterPro" id="IPR023404">
    <property type="entry name" value="rSAM_horseshoe"/>
</dbReference>
<dbReference type="InterPro" id="IPR002792">
    <property type="entry name" value="TRAM_dom"/>
</dbReference>
<dbReference type="NCBIfam" id="TIGR01574">
    <property type="entry name" value="miaB-methiolase"/>
    <property type="match status" value="1"/>
</dbReference>
<dbReference type="NCBIfam" id="TIGR00089">
    <property type="entry name" value="MiaB/RimO family radical SAM methylthiotransferase"/>
    <property type="match status" value="1"/>
</dbReference>
<dbReference type="PANTHER" id="PTHR43020">
    <property type="entry name" value="CDK5 REGULATORY SUBUNIT-ASSOCIATED PROTEIN 1"/>
    <property type="match status" value="1"/>
</dbReference>
<dbReference type="PANTHER" id="PTHR43020:SF2">
    <property type="entry name" value="MITOCHONDRIAL TRNA METHYLTHIOTRANSFERASE CDK5RAP1"/>
    <property type="match status" value="1"/>
</dbReference>
<dbReference type="Pfam" id="PF04055">
    <property type="entry name" value="Radical_SAM"/>
    <property type="match status" value="1"/>
</dbReference>
<dbReference type="Pfam" id="PF01938">
    <property type="entry name" value="TRAM"/>
    <property type="match status" value="1"/>
</dbReference>
<dbReference type="Pfam" id="PF00919">
    <property type="entry name" value="UPF0004"/>
    <property type="match status" value="1"/>
</dbReference>
<dbReference type="SFLD" id="SFLDF00273">
    <property type="entry name" value="(dimethylallyl)adenosine_tRNA"/>
    <property type="match status" value="1"/>
</dbReference>
<dbReference type="SFLD" id="SFLDG01082">
    <property type="entry name" value="B12-binding_domain_containing"/>
    <property type="match status" value="1"/>
</dbReference>
<dbReference type="SFLD" id="SFLDS00029">
    <property type="entry name" value="Radical_SAM"/>
    <property type="match status" value="1"/>
</dbReference>
<dbReference type="SMART" id="SM00729">
    <property type="entry name" value="Elp3"/>
    <property type="match status" value="1"/>
</dbReference>
<dbReference type="SUPFAM" id="SSF102114">
    <property type="entry name" value="Radical SAM enzymes"/>
    <property type="match status" value="1"/>
</dbReference>
<dbReference type="PROSITE" id="PS51449">
    <property type="entry name" value="MTTASE_N"/>
    <property type="match status" value="1"/>
</dbReference>
<dbReference type="PROSITE" id="PS01278">
    <property type="entry name" value="MTTASE_RADICAL"/>
    <property type="match status" value="1"/>
</dbReference>
<dbReference type="PROSITE" id="PS51918">
    <property type="entry name" value="RADICAL_SAM"/>
    <property type="match status" value="1"/>
</dbReference>
<dbReference type="PROSITE" id="PS50926">
    <property type="entry name" value="TRAM"/>
    <property type="match status" value="1"/>
</dbReference>
<evidence type="ECO:0000255" key="1">
    <source>
        <dbReference type="HAMAP-Rule" id="MF_01864"/>
    </source>
</evidence>
<evidence type="ECO:0000255" key="2">
    <source>
        <dbReference type="PROSITE-ProRule" id="PRU01266"/>
    </source>
</evidence>
<comment type="function">
    <text evidence="1">Catalyzes the methylthiolation of N6-(dimethylallyl)adenosine (i(6)A), leading to the formation of 2-methylthio-N6-(dimethylallyl)adenosine (ms(2)i(6)A) at position 37 in tRNAs that read codons beginning with uridine.</text>
</comment>
<comment type="catalytic activity">
    <reaction evidence="1">
        <text>N(6)-dimethylallyladenosine(37) in tRNA + (sulfur carrier)-SH + AH2 + 2 S-adenosyl-L-methionine = 2-methylsulfanyl-N(6)-dimethylallyladenosine(37) in tRNA + (sulfur carrier)-H + 5'-deoxyadenosine + L-methionine + A + S-adenosyl-L-homocysteine + 2 H(+)</text>
        <dbReference type="Rhea" id="RHEA:37067"/>
        <dbReference type="Rhea" id="RHEA-COMP:10375"/>
        <dbReference type="Rhea" id="RHEA-COMP:10376"/>
        <dbReference type="Rhea" id="RHEA-COMP:14737"/>
        <dbReference type="Rhea" id="RHEA-COMP:14739"/>
        <dbReference type="ChEBI" id="CHEBI:13193"/>
        <dbReference type="ChEBI" id="CHEBI:15378"/>
        <dbReference type="ChEBI" id="CHEBI:17319"/>
        <dbReference type="ChEBI" id="CHEBI:17499"/>
        <dbReference type="ChEBI" id="CHEBI:29917"/>
        <dbReference type="ChEBI" id="CHEBI:57844"/>
        <dbReference type="ChEBI" id="CHEBI:57856"/>
        <dbReference type="ChEBI" id="CHEBI:59789"/>
        <dbReference type="ChEBI" id="CHEBI:64428"/>
        <dbReference type="ChEBI" id="CHEBI:74415"/>
        <dbReference type="ChEBI" id="CHEBI:74417"/>
        <dbReference type="EC" id="2.8.4.3"/>
    </reaction>
</comment>
<comment type="cofactor">
    <cofactor evidence="1">
        <name>[4Fe-4S] cluster</name>
        <dbReference type="ChEBI" id="CHEBI:49883"/>
    </cofactor>
    <text evidence="1">Binds 2 [4Fe-4S] clusters. One cluster is coordinated with 3 cysteines and an exchangeable S-adenosyl-L-methionine.</text>
</comment>
<comment type="subunit">
    <text evidence="1">Monomer.</text>
</comment>
<comment type="subcellular location">
    <subcellularLocation>
        <location evidence="1">Cytoplasm</location>
    </subcellularLocation>
</comment>
<comment type="similarity">
    <text evidence="1">Belongs to the methylthiotransferase family. MiaB subfamily.</text>
</comment>
<accession>A7MQS5</accession>
<name>MIAB_CROS8</name>